<organism>
    <name type="scientific">Saccharomyces cerevisiae (strain ATCC 204508 / S288c)</name>
    <name type="common">Baker's yeast</name>
    <dbReference type="NCBI Taxonomy" id="559292"/>
    <lineage>
        <taxon>Eukaryota</taxon>
        <taxon>Fungi</taxon>
        <taxon>Dikarya</taxon>
        <taxon>Ascomycota</taxon>
        <taxon>Saccharomycotina</taxon>
        <taxon>Saccharomycetes</taxon>
        <taxon>Saccharomycetales</taxon>
        <taxon>Saccharomycetaceae</taxon>
        <taxon>Saccharomyces</taxon>
    </lineage>
</organism>
<reference key="1">
    <citation type="journal article" date="1996" name="Yeast">
        <title>Analysis of a 36.2 kb DNA sequence including the right telomere of chromosome VI from Saccharomyces cerevisiae.</title>
        <authorList>
            <person name="Eki T."/>
            <person name="Naitou M."/>
            <person name="Hagiwara H."/>
            <person name="Ozawa M."/>
            <person name="Sasanuma S."/>
            <person name="Sasanuma M."/>
            <person name="Tsuchiya Y."/>
            <person name="Shibata T."/>
            <person name="Hanaoka F."/>
            <person name="Murakami Y."/>
        </authorList>
    </citation>
    <scope>NUCLEOTIDE SEQUENCE [GENOMIC DNA]</scope>
    <source>
        <strain>ATCC 204511 / S288c / AB972</strain>
    </source>
</reference>
<reference key="2">
    <citation type="journal article" date="1995" name="Nat. Genet.">
        <title>Analysis of the nucleotide sequence of chromosome VI from Saccharomyces cerevisiae.</title>
        <authorList>
            <person name="Murakami Y."/>
            <person name="Naitou M."/>
            <person name="Hagiwara H."/>
            <person name="Shibata T."/>
            <person name="Ozawa M."/>
            <person name="Sasanuma S."/>
            <person name="Sasanuma M."/>
            <person name="Tsuchiya Y."/>
            <person name="Soeda E."/>
            <person name="Yokoyama K."/>
            <person name="Yamazaki M."/>
            <person name="Tashiro H."/>
            <person name="Eki T."/>
        </authorList>
    </citation>
    <scope>NUCLEOTIDE SEQUENCE [LARGE SCALE GENOMIC DNA]</scope>
    <source>
        <strain>ATCC 204508 / S288c</strain>
    </source>
</reference>
<reference key="3">
    <citation type="journal article" date="2014" name="G3 (Bethesda)">
        <title>The reference genome sequence of Saccharomyces cerevisiae: Then and now.</title>
        <authorList>
            <person name="Engel S.R."/>
            <person name="Dietrich F.S."/>
            <person name="Fisk D.G."/>
            <person name="Binkley G."/>
            <person name="Balakrishnan R."/>
            <person name="Costanzo M.C."/>
            <person name="Dwight S.S."/>
            <person name="Hitz B.C."/>
            <person name="Karra K."/>
            <person name="Nash R.S."/>
            <person name="Weng S."/>
            <person name="Wong E.D."/>
            <person name="Lloyd P."/>
            <person name="Skrzypek M.S."/>
            <person name="Miyasato S.R."/>
            <person name="Simison M."/>
            <person name="Cherry J.M."/>
        </authorList>
    </citation>
    <scope>GENOME REANNOTATION</scope>
    <source>
        <strain>ATCC 204508 / S288c</strain>
    </source>
</reference>
<reference key="4">
    <citation type="journal article" date="2002" name="FEBS Lett.">
        <title>Aerobic and anaerobic NAD+ metabolism in Saccharomyces cerevisiae.</title>
        <authorList>
            <person name="Panozzo C."/>
            <person name="Nawara M."/>
            <person name="Suski C."/>
            <person name="Kucharczyka R."/>
            <person name="Skoneczny M."/>
            <person name="Becam A.-M."/>
            <person name="Rytka J."/>
            <person name="Herbert C.J."/>
        </authorList>
    </citation>
    <scope>CATALYTIC ACTIVITY</scope>
    <scope>PATHWAY</scope>
</reference>
<reference key="5">
    <citation type="journal article" date="2003" name="Nature">
        <title>Global analysis of protein localization in budding yeast.</title>
        <authorList>
            <person name="Huh W.-K."/>
            <person name="Falvo J.V."/>
            <person name="Gerke L.C."/>
            <person name="Carroll A.S."/>
            <person name="Howson R.W."/>
            <person name="Weissman J.S."/>
            <person name="O'Shea E.K."/>
        </authorList>
    </citation>
    <scope>SUBCELLULAR LOCATION [LARGE SCALE ANALYSIS]</scope>
</reference>
<reference key="6">
    <citation type="journal article" date="2003" name="Nature">
        <title>Global analysis of protein expression in yeast.</title>
        <authorList>
            <person name="Ghaemmaghami S."/>
            <person name="Huh W.-K."/>
            <person name="Bower K."/>
            <person name="Howson R.W."/>
            <person name="Belle A."/>
            <person name="Dephoure N."/>
            <person name="O'Shea E.K."/>
            <person name="Weissman J.S."/>
        </authorList>
    </citation>
    <scope>LEVEL OF PROTEIN EXPRESSION [LARGE SCALE ANALYSIS]</scope>
</reference>
<reference key="7">
    <citation type="journal article" date="2008" name="Biochemistry">
        <title>Comprehensive X-ray structural studies of the quinolinate phosphoribosyl transferase (BNA6) from Saccharomyces cerevisiae.</title>
        <authorList>
            <person name="di Luccio E."/>
            <person name="Wilson D.K."/>
        </authorList>
    </citation>
    <scope>X-RAY CRYSTALLOGRAPHY (1.90 ANGSTROMS) OF 1-295 IN COMPLEX WITH SUBSTRATE</scope>
    <scope>SUBUNIT</scope>
</reference>
<dbReference type="EC" id="2.4.2.19"/>
<dbReference type="EMBL" id="D50617">
    <property type="protein sequence ID" value="BAA09286.1"/>
    <property type="molecule type" value="Genomic_DNA"/>
</dbReference>
<dbReference type="EMBL" id="BK006940">
    <property type="protein sequence ID" value="DAA12490.1"/>
    <property type="molecule type" value="Genomic_DNA"/>
</dbReference>
<dbReference type="PIR" id="S56302">
    <property type="entry name" value="S56302"/>
</dbReference>
<dbReference type="RefSeq" id="NP_602317.3">
    <property type="nucleotide sequence ID" value="NM_001180012.3"/>
</dbReference>
<dbReference type="PDB" id="3C2E">
    <property type="method" value="X-ray"/>
    <property type="resolution" value="1.90 A"/>
    <property type="chains" value="A=2-295"/>
</dbReference>
<dbReference type="PDB" id="3C2F">
    <property type="method" value="X-ray"/>
    <property type="resolution" value="2.35 A"/>
    <property type="chains" value="A=2-295"/>
</dbReference>
<dbReference type="PDB" id="3C2O">
    <property type="method" value="X-ray"/>
    <property type="resolution" value="2.30 A"/>
    <property type="chains" value="A=2-295"/>
</dbReference>
<dbReference type="PDB" id="3C2R">
    <property type="method" value="X-ray"/>
    <property type="resolution" value="2.40 A"/>
    <property type="chains" value="A/B=1-295"/>
</dbReference>
<dbReference type="PDB" id="3C2V">
    <property type="method" value="X-ray"/>
    <property type="resolution" value="2.29 A"/>
    <property type="chains" value="A=2-295"/>
</dbReference>
<dbReference type="PDBsum" id="3C2E"/>
<dbReference type="PDBsum" id="3C2F"/>
<dbReference type="PDBsum" id="3C2O"/>
<dbReference type="PDBsum" id="3C2R"/>
<dbReference type="PDBsum" id="3C2V"/>
<dbReference type="SMR" id="P43619"/>
<dbReference type="BioGRID" id="31205">
    <property type="interactions" value="51"/>
</dbReference>
<dbReference type="DIP" id="DIP-1569N"/>
<dbReference type="FunCoup" id="P43619">
    <property type="interactions" value="302"/>
</dbReference>
<dbReference type="IntAct" id="P43619">
    <property type="interactions" value="3"/>
</dbReference>
<dbReference type="MINT" id="P43619"/>
<dbReference type="STRING" id="4932.YFR047C"/>
<dbReference type="iPTMnet" id="P43619"/>
<dbReference type="PaxDb" id="4932-YFR047C"/>
<dbReference type="PeptideAtlas" id="P43619"/>
<dbReference type="TopDownProteomics" id="P43619"/>
<dbReference type="EnsemblFungi" id="YFR047C_mRNA">
    <property type="protein sequence ID" value="YFR047C"/>
    <property type="gene ID" value="YFR047C"/>
</dbReference>
<dbReference type="GeneID" id="850608"/>
<dbReference type="KEGG" id="sce:YFR047C"/>
<dbReference type="AGR" id="SGD:S000001943"/>
<dbReference type="SGD" id="S000001943">
    <property type="gene designation" value="BNA6"/>
</dbReference>
<dbReference type="VEuPathDB" id="FungiDB:YFR047C"/>
<dbReference type="eggNOG" id="KOG3008">
    <property type="taxonomic scope" value="Eukaryota"/>
</dbReference>
<dbReference type="GeneTree" id="ENSGT00390000002761"/>
<dbReference type="HOGENOM" id="CLU_039622_1_0_1"/>
<dbReference type="InParanoid" id="P43619"/>
<dbReference type="OMA" id="DIVMCDN"/>
<dbReference type="OrthoDB" id="10067394at2759"/>
<dbReference type="BioCyc" id="MetaCyc:YFR047C-MONOMER"/>
<dbReference type="BioCyc" id="YEAST:YFR047C-MONOMER"/>
<dbReference type="BRENDA" id="2.4.2.19">
    <property type="organism ID" value="984"/>
</dbReference>
<dbReference type="Reactome" id="R-SCE-196807">
    <property type="pathway name" value="Nicotinate metabolism"/>
</dbReference>
<dbReference type="UniPathway" id="UPA00253">
    <property type="reaction ID" value="UER00331"/>
</dbReference>
<dbReference type="BioGRID-ORCS" id="850608">
    <property type="hits" value="5 hits in 10 CRISPR screens"/>
</dbReference>
<dbReference type="EvolutionaryTrace" id="P43619"/>
<dbReference type="PRO" id="PR:P43619"/>
<dbReference type="Proteomes" id="UP000002311">
    <property type="component" value="Chromosome VI"/>
</dbReference>
<dbReference type="RNAct" id="P43619">
    <property type="molecule type" value="protein"/>
</dbReference>
<dbReference type="GO" id="GO:0005737">
    <property type="term" value="C:cytoplasm"/>
    <property type="evidence" value="ECO:0007005"/>
    <property type="project" value="SGD"/>
</dbReference>
<dbReference type="GO" id="GO:0005634">
    <property type="term" value="C:nucleus"/>
    <property type="evidence" value="ECO:0007005"/>
    <property type="project" value="SGD"/>
</dbReference>
<dbReference type="GO" id="GO:0004514">
    <property type="term" value="F:nicotinate-nucleotide diphosphorylase (carboxylating) activity"/>
    <property type="evidence" value="ECO:0000315"/>
    <property type="project" value="SGD"/>
</dbReference>
<dbReference type="GO" id="GO:0034354">
    <property type="term" value="P:'de novo' NAD biosynthetic process from L-tryptophan"/>
    <property type="evidence" value="ECO:0000316"/>
    <property type="project" value="SGD"/>
</dbReference>
<dbReference type="GO" id="GO:0009435">
    <property type="term" value="P:NAD biosynthetic process"/>
    <property type="evidence" value="ECO:0000318"/>
    <property type="project" value="GO_Central"/>
</dbReference>
<dbReference type="GO" id="GO:0034213">
    <property type="term" value="P:quinolinate catabolic process"/>
    <property type="evidence" value="ECO:0000318"/>
    <property type="project" value="GO_Central"/>
</dbReference>
<dbReference type="CDD" id="cd01572">
    <property type="entry name" value="QPRTase"/>
    <property type="match status" value="1"/>
</dbReference>
<dbReference type="FunFam" id="3.20.20.70:FF:000090">
    <property type="entry name" value="Nicotinate-nucleotide pyrophosphorylase [carboxylating]"/>
    <property type="match status" value="1"/>
</dbReference>
<dbReference type="FunFam" id="3.90.1170.20:FF:000003">
    <property type="entry name" value="Nicotinate-nucleotide pyrophosphorylase [carboxylating]"/>
    <property type="match status" value="1"/>
</dbReference>
<dbReference type="Gene3D" id="3.20.20.70">
    <property type="entry name" value="Aldolase class I"/>
    <property type="match status" value="1"/>
</dbReference>
<dbReference type="Gene3D" id="3.90.1170.20">
    <property type="entry name" value="Quinolinate phosphoribosyl transferase, N-terminal domain"/>
    <property type="match status" value="1"/>
</dbReference>
<dbReference type="InterPro" id="IPR013785">
    <property type="entry name" value="Aldolase_TIM"/>
</dbReference>
<dbReference type="InterPro" id="IPR004393">
    <property type="entry name" value="NadC"/>
</dbReference>
<dbReference type="InterPro" id="IPR027277">
    <property type="entry name" value="NadC/ModD"/>
</dbReference>
<dbReference type="InterPro" id="IPR036068">
    <property type="entry name" value="Nicotinate_pribotase-like_C"/>
</dbReference>
<dbReference type="InterPro" id="IPR037128">
    <property type="entry name" value="Quinolinate_PRibosylTase_N_sf"/>
</dbReference>
<dbReference type="InterPro" id="IPR002638">
    <property type="entry name" value="Quinolinate_PRibosylTrfase_C"/>
</dbReference>
<dbReference type="InterPro" id="IPR022412">
    <property type="entry name" value="Quinolinate_PRibosylTrfase_N"/>
</dbReference>
<dbReference type="NCBIfam" id="TIGR00078">
    <property type="entry name" value="nadC"/>
    <property type="match status" value="1"/>
</dbReference>
<dbReference type="PANTHER" id="PTHR32179">
    <property type="entry name" value="NICOTINATE-NUCLEOTIDE PYROPHOSPHORYLASE [CARBOXYLATING]"/>
    <property type="match status" value="1"/>
</dbReference>
<dbReference type="PANTHER" id="PTHR32179:SF3">
    <property type="entry name" value="NICOTINATE-NUCLEOTIDE PYROPHOSPHORYLASE [CARBOXYLATING]"/>
    <property type="match status" value="1"/>
</dbReference>
<dbReference type="Pfam" id="PF01729">
    <property type="entry name" value="QRPTase_C"/>
    <property type="match status" value="1"/>
</dbReference>
<dbReference type="Pfam" id="PF02749">
    <property type="entry name" value="QRPTase_N"/>
    <property type="match status" value="1"/>
</dbReference>
<dbReference type="PIRSF" id="PIRSF006250">
    <property type="entry name" value="NadC_ModD"/>
    <property type="match status" value="1"/>
</dbReference>
<dbReference type="SUPFAM" id="SSF51690">
    <property type="entry name" value="Nicotinate/Quinolinate PRTase C-terminal domain-like"/>
    <property type="match status" value="1"/>
</dbReference>
<dbReference type="SUPFAM" id="SSF54675">
    <property type="entry name" value="Nicotinate/Quinolinate PRTase N-terminal domain-like"/>
    <property type="match status" value="1"/>
</dbReference>
<keyword id="KW-0002">3D-structure</keyword>
<keyword id="KW-0963">Cytoplasm</keyword>
<keyword id="KW-0328">Glycosyltransferase</keyword>
<keyword id="KW-0539">Nucleus</keyword>
<keyword id="KW-0662">Pyridine nucleotide biosynthesis</keyword>
<keyword id="KW-1185">Reference proteome</keyword>
<keyword id="KW-0808">Transferase</keyword>
<accession>P43619</accession>
<accession>D6VTT0</accession>
<evidence type="ECO:0000250" key="1"/>
<evidence type="ECO:0000269" key="2">
    <source>
    </source>
</evidence>
<evidence type="ECO:0000269" key="3">
    <source>
    </source>
</evidence>
<evidence type="ECO:0000269" key="4">
    <source>
    </source>
</evidence>
<evidence type="ECO:0000269" key="5">
    <source>
    </source>
</evidence>
<evidence type="ECO:0000305" key="6"/>
<evidence type="ECO:0007829" key="7">
    <source>
        <dbReference type="PDB" id="3C2E"/>
    </source>
</evidence>
<evidence type="ECO:0007829" key="8">
    <source>
        <dbReference type="PDB" id="3C2O"/>
    </source>
</evidence>
<evidence type="ECO:0007829" key="9">
    <source>
        <dbReference type="PDB" id="3C2V"/>
    </source>
</evidence>
<sequence>MPVYEHLLPVNGAWRQDVTNWLSEDVPSFDFGGYVVGSDLKEANLYCKQDGMLCGVPFAQEVFNQCELQVEWLFKEGSFLEPSKNDSGKIVVAKITGPAKNILLAERTALNILSRSSGIATASHKIISLARSTGYKGTIAGTRKTTPGLRRLEKYSMLVGGCDTHRYDLSSMVMLKDNHIWATGSITNAVKNARAVCGFAVKIEVECLSEDEATEAIEAGADVIMLDNFKGDGLKMCAQSLKNKWNGKKHFLLECSGGLNLDNLEEYLCDDIDIYSTSSIHQGTPVIDFSLKLAH</sequence>
<comment type="function">
    <text evidence="1">Involved in the catabolism of quinolinic acid (QA).</text>
</comment>
<comment type="catalytic activity">
    <reaction evidence="2">
        <text>nicotinate beta-D-ribonucleotide + CO2 + diphosphate = quinolinate + 5-phospho-alpha-D-ribose 1-diphosphate + 2 H(+)</text>
        <dbReference type="Rhea" id="RHEA:12733"/>
        <dbReference type="ChEBI" id="CHEBI:15378"/>
        <dbReference type="ChEBI" id="CHEBI:16526"/>
        <dbReference type="ChEBI" id="CHEBI:29959"/>
        <dbReference type="ChEBI" id="CHEBI:33019"/>
        <dbReference type="ChEBI" id="CHEBI:57502"/>
        <dbReference type="ChEBI" id="CHEBI:58017"/>
        <dbReference type="EC" id="2.4.2.19"/>
    </reaction>
</comment>
<comment type="pathway">
    <text evidence="2">Cofactor biosynthesis; NAD(+) biosynthesis; nicotinate D-ribonucleotide from quinolinate: step 1/1.</text>
</comment>
<comment type="subunit">
    <text evidence="5">Hexamer formed by 3 homodimers.</text>
</comment>
<comment type="subcellular location">
    <subcellularLocation>
        <location evidence="3">Cytoplasm</location>
    </subcellularLocation>
    <subcellularLocation>
        <location evidence="3">Nucleus</location>
    </subcellularLocation>
</comment>
<comment type="miscellaneous">
    <text evidence="4">Present with 2660 molecules/cell in log phase SD medium.</text>
</comment>
<comment type="similarity">
    <text evidence="6">Belongs to the NadC/ModD family.</text>
</comment>
<protein>
    <recommendedName>
        <fullName>Nicotinate-nucleotide pyrophosphorylase [carboxylating]</fullName>
        <ecNumber>2.4.2.19</ecNumber>
    </recommendedName>
    <alternativeName>
        <fullName>Quinolinate phosphoribosyltransferase [decarboxylating]</fullName>
        <shortName>QAPRTase</shortName>
    </alternativeName>
</protein>
<proteinExistence type="evidence at protein level"/>
<name>NADC_YEAST</name>
<feature type="chain" id="PRO_0000155956" description="Nicotinate-nucleotide pyrophosphorylase [carboxylating]">
    <location>
        <begin position="1"/>
        <end position="295"/>
    </location>
</feature>
<feature type="binding site" evidence="5">
    <location>
        <position position="107"/>
    </location>
    <ligand>
        <name>substrate</name>
    </ligand>
</feature>
<feature type="binding site">
    <location>
        <begin position="142"/>
        <end position="144"/>
    </location>
    <ligand>
        <name>substrate</name>
    </ligand>
</feature>
<feature type="binding site" evidence="5">
    <location>
        <position position="166"/>
    </location>
    <ligand>
        <name>substrate</name>
    </ligand>
</feature>
<feature type="binding site" evidence="5">
    <location>
        <position position="176"/>
    </location>
    <ligand>
        <name>substrate</name>
    </ligand>
</feature>
<feature type="binding site" evidence="1">
    <location>
        <position position="206"/>
    </location>
    <ligand>
        <name>substrate</name>
    </ligand>
</feature>
<feature type="binding site" evidence="5">
    <location>
        <position position="227"/>
    </location>
    <ligand>
        <name>substrate</name>
    </ligand>
</feature>
<feature type="binding site">
    <location>
        <begin position="256"/>
        <end position="258"/>
    </location>
    <ligand>
        <name>substrate</name>
    </ligand>
</feature>
<feature type="helix" evidence="7">
    <location>
        <begin position="4"/>
        <end position="7"/>
    </location>
</feature>
<feature type="strand" evidence="7">
    <location>
        <begin position="10"/>
        <end position="12"/>
    </location>
</feature>
<feature type="helix" evidence="7">
    <location>
        <begin position="13"/>
        <end position="25"/>
    </location>
</feature>
<feature type="helix" evidence="7">
    <location>
        <begin position="31"/>
        <end position="36"/>
    </location>
</feature>
<feature type="strand" evidence="7">
    <location>
        <begin position="40"/>
        <end position="47"/>
    </location>
</feature>
<feature type="strand" evidence="7">
    <location>
        <begin position="49"/>
        <end position="52"/>
    </location>
</feature>
<feature type="helix" evidence="7">
    <location>
        <begin position="56"/>
        <end position="65"/>
    </location>
</feature>
<feature type="strand" evidence="7">
    <location>
        <begin position="69"/>
        <end position="74"/>
    </location>
</feature>
<feature type="helix" evidence="7">
    <location>
        <begin position="82"/>
        <end position="84"/>
    </location>
</feature>
<feature type="strand" evidence="7">
    <location>
        <begin position="85"/>
        <end position="88"/>
    </location>
</feature>
<feature type="strand" evidence="7">
    <location>
        <begin position="90"/>
        <end position="98"/>
    </location>
</feature>
<feature type="helix" evidence="7">
    <location>
        <begin position="99"/>
        <end position="132"/>
    </location>
</feature>
<feature type="strand" evidence="7">
    <location>
        <begin position="137"/>
        <end position="140"/>
    </location>
</feature>
<feature type="turn" evidence="9">
    <location>
        <begin position="147"/>
        <end position="149"/>
    </location>
</feature>
<feature type="helix" evidence="7">
    <location>
        <begin position="150"/>
        <end position="159"/>
    </location>
</feature>
<feature type="turn" evidence="7">
    <location>
        <begin position="169"/>
        <end position="171"/>
    </location>
</feature>
<feature type="strand" evidence="7">
    <location>
        <begin position="172"/>
        <end position="175"/>
    </location>
</feature>
<feature type="helix" evidence="7">
    <location>
        <begin position="177"/>
        <end position="183"/>
    </location>
</feature>
<feature type="helix" evidence="7">
    <location>
        <begin position="186"/>
        <end position="197"/>
    </location>
</feature>
<feature type="strand" evidence="8">
    <location>
        <begin position="199"/>
        <end position="201"/>
    </location>
</feature>
<feature type="strand" evidence="7">
    <location>
        <begin position="203"/>
        <end position="206"/>
    </location>
</feature>
<feature type="strand" evidence="7">
    <location>
        <begin position="208"/>
        <end position="210"/>
    </location>
</feature>
<feature type="helix" evidence="7">
    <location>
        <begin position="211"/>
        <end position="219"/>
    </location>
</feature>
<feature type="strand" evidence="7">
    <location>
        <begin position="222"/>
        <end position="225"/>
    </location>
</feature>
<feature type="strand" evidence="7">
    <location>
        <begin position="252"/>
        <end position="256"/>
    </location>
</feature>
<feature type="strand" evidence="7">
    <location>
        <begin position="273"/>
        <end position="276"/>
    </location>
</feature>
<feature type="helix" evidence="7">
    <location>
        <begin position="278"/>
        <end position="280"/>
    </location>
</feature>
<feature type="turn" evidence="9">
    <location>
        <begin position="281"/>
        <end position="283"/>
    </location>
</feature>
<feature type="strand" evidence="7">
    <location>
        <begin position="289"/>
        <end position="293"/>
    </location>
</feature>
<gene>
    <name type="primary">BNA6</name>
    <name type="synonym">QPT1</name>
    <name type="ordered locus">YFR047C</name>
</gene>